<feature type="chain" id="PRO_0000457936" description="Metal transporter Nramp1">
    <location>
        <begin position="1"/>
        <end position="541"/>
    </location>
</feature>
<feature type="transmembrane region" description="Helical; Name=1" evidence="1">
    <location>
        <begin position="45"/>
        <end position="65"/>
    </location>
</feature>
<feature type="transmembrane region" description="Helical; Name=2" evidence="1">
    <location>
        <begin position="78"/>
        <end position="98"/>
    </location>
</feature>
<feature type="transmembrane region" description="Helical; Name=3" evidence="1">
    <location>
        <begin position="122"/>
        <end position="142"/>
    </location>
</feature>
<feature type="transmembrane region" description="Helical; Name=4" evidence="1">
    <location>
        <begin position="153"/>
        <end position="173"/>
    </location>
</feature>
<feature type="transmembrane region" description="Helical; Name=5" evidence="1">
    <location>
        <begin position="182"/>
        <end position="202"/>
    </location>
</feature>
<feature type="transmembrane region" description="Helical; Name=6" evidence="1">
    <location>
        <begin position="222"/>
        <end position="242"/>
    </location>
</feature>
<feature type="transmembrane region" description="Helical; Name=7" evidence="1">
    <location>
        <begin position="271"/>
        <end position="291"/>
    </location>
</feature>
<feature type="transmembrane region" description="Helical; Name=8" evidence="1">
    <location>
        <begin position="315"/>
        <end position="335"/>
    </location>
</feature>
<feature type="transmembrane region" description="Helical; Name=9" evidence="1">
    <location>
        <begin position="371"/>
        <end position="391"/>
    </location>
</feature>
<feature type="transmembrane region" description="Helical; Name=10" evidence="1">
    <location>
        <begin position="392"/>
        <end position="412"/>
    </location>
</feature>
<feature type="transmembrane region" description="Helical; Name=11" evidence="1">
    <location>
        <begin position="430"/>
        <end position="450"/>
    </location>
</feature>
<feature type="transmembrane region" description="Helical; Name=12" evidence="1">
    <location>
        <begin position="465"/>
        <end position="485"/>
    </location>
</feature>
<feature type="glycosylation site" description="N-linked (GlcNAc...) asparagine" evidence="2">
    <location>
        <position position="17"/>
    </location>
</feature>
<feature type="glycosylation site" description="N-linked (GlcNAc...) asparagine" evidence="2">
    <location>
        <position position="426"/>
    </location>
</feature>
<feature type="glycosylation site" description="N-linked (GlcNAc...) asparagine" evidence="2">
    <location>
        <position position="511"/>
    </location>
</feature>
<keyword id="KW-0325">Glycoprotein</keyword>
<keyword id="KW-0406">Ion transport</keyword>
<keyword id="KW-0472">Membrane</keyword>
<keyword id="KW-1185">Reference proteome</keyword>
<keyword id="KW-0812">Transmembrane</keyword>
<keyword id="KW-1133">Transmembrane helix</keyword>
<keyword id="KW-0813">Transport</keyword>
<protein>
    <recommendedName>
        <fullName evidence="3 4">Metal transporter Nramp1</fullName>
        <shortName evidence="4">PotriNRAMP1</shortName>
        <shortName evidence="3">PtNRAMP1</shortName>
    </recommendedName>
    <alternativeName>
        <fullName evidence="5">Natural resistance-associated macrophage protein 1</fullName>
    </alternativeName>
</protein>
<reference key="1">
    <citation type="journal article" date="2006" name="Science">
        <title>The genome of black cottonwood, Populus trichocarpa (Torr. &amp; Gray).</title>
        <authorList>
            <person name="Tuskan G.A."/>
            <person name="Difazio S."/>
            <person name="Jansson S."/>
            <person name="Bohlmann J."/>
            <person name="Grigoriev I."/>
            <person name="Hellsten U."/>
            <person name="Putnam N."/>
            <person name="Ralph S."/>
            <person name="Rombauts S."/>
            <person name="Salamov A."/>
            <person name="Schein J."/>
            <person name="Sterck L."/>
            <person name="Aerts A."/>
            <person name="Bhalerao R.R."/>
            <person name="Bhalerao R.P."/>
            <person name="Blaudez D."/>
            <person name="Boerjan W."/>
            <person name="Brun A."/>
            <person name="Brunner A."/>
            <person name="Busov V."/>
            <person name="Campbell M."/>
            <person name="Carlson J."/>
            <person name="Chalot M."/>
            <person name="Chapman J."/>
            <person name="Chen G.-L."/>
            <person name="Cooper D."/>
            <person name="Coutinho P.M."/>
            <person name="Couturier J."/>
            <person name="Covert S."/>
            <person name="Cronk Q."/>
            <person name="Cunningham R."/>
            <person name="Davis J."/>
            <person name="Degroeve S."/>
            <person name="Dejardin A."/>
            <person name="dePamphilis C.W."/>
            <person name="Detter J."/>
            <person name="Dirks B."/>
            <person name="Dubchak I."/>
            <person name="Duplessis S."/>
            <person name="Ehlting J."/>
            <person name="Ellis B."/>
            <person name="Gendler K."/>
            <person name="Goodstein D."/>
            <person name="Gribskov M."/>
            <person name="Grimwood J."/>
            <person name="Groover A."/>
            <person name="Gunter L."/>
            <person name="Hamberger B."/>
            <person name="Heinze B."/>
            <person name="Helariutta Y."/>
            <person name="Henrissat B."/>
            <person name="Holligan D."/>
            <person name="Holt R."/>
            <person name="Huang W."/>
            <person name="Islam-Faridi N."/>
            <person name="Jones S."/>
            <person name="Jones-Rhoades M."/>
            <person name="Jorgensen R."/>
            <person name="Joshi C."/>
            <person name="Kangasjaervi J."/>
            <person name="Karlsson J."/>
            <person name="Kelleher C."/>
            <person name="Kirkpatrick R."/>
            <person name="Kirst M."/>
            <person name="Kohler A."/>
            <person name="Kalluri U."/>
            <person name="Larimer F."/>
            <person name="Leebens-Mack J."/>
            <person name="Leple J.-C."/>
            <person name="Locascio P."/>
            <person name="Lou Y."/>
            <person name="Lucas S."/>
            <person name="Martin F."/>
            <person name="Montanini B."/>
            <person name="Napoli C."/>
            <person name="Nelson D.R."/>
            <person name="Nelson C."/>
            <person name="Nieminen K."/>
            <person name="Nilsson O."/>
            <person name="Pereda V."/>
            <person name="Peter G."/>
            <person name="Philippe R."/>
            <person name="Pilate G."/>
            <person name="Poliakov A."/>
            <person name="Razumovskaya J."/>
            <person name="Richardson P."/>
            <person name="Rinaldi C."/>
            <person name="Ritland K."/>
            <person name="Rouze P."/>
            <person name="Ryaboy D."/>
            <person name="Schmutz J."/>
            <person name="Schrader J."/>
            <person name="Segerman B."/>
            <person name="Shin H."/>
            <person name="Siddiqui A."/>
            <person name="Sterky F."/>
            <person name="Terry A."/>
            <person name="Tsai C.-J."/>
            <person name="Uberbacher E."/>
            <person name="Unneberg P."/>
            <person name="Vahala J."/>
            <person name="Wall K."/>
            <person name="Wessler S."/>
            <person name="Yang G."/>
            <person name="Yin T."/>
            <person name="Douglas C."/>
            <person name="Marra M."/>
            <person name="Sandberg G."/>
            <person name="Van de Peer Y."/>
            <person name="Rokhsar D.S."/>
        </authorList>
    </citation>
    <scope>NUCLEOTIDE SEQUENCE [LARGE SCALE GENOMIC DNA]</scope>
    <source>
        <strain>cv. Nisqually</strain>
    </source>
</reference>
<reference key="2">
    <citation type="journal article" date="2010" name="Cell. Mol. Life Sci.">
        <title>Genome-wide analysis of plant metal transporters, with an emphasis on poplar.</title>
        <authorList>
            <person name="Migeon A."/>
            <person name="Blaudez D."/>
            <person name="Wilkins O."/>
            <person name="Montanini B."/>
            <person name="Campbell M.M."/>
            <person name="Richaud P."/>
            <person name="Thomine S."/>
            <person name="Chalot M."/>
        </authorList>
    </citation>
    <scope>GENE FAMILY</scope>
    <scope>NOMENCLATURE</scope>
</reference>
<reference key="3">
    <citation type="journal article" date="2022" name="Mol. Biol. Evol.">
        <title>Duplication of NRAMP3 gene in poplars generated two homologous transporters with distinct functions.</title>
        <authorList>
            <person name="Pottier M."/>
            <person name="Le Thi V.A."/>
            <person name="Primard-Brisset C."/>
            <person name="Marion J."/>
            <person name="Bianchi M.W."/>
            <person name="Victor C."/>
            <person name="Dejardin A."/>
            <person name="Pilate G."/>
            <person name="Thomine S."/>
        </authorList>
    </citation>
    <scope>GENE FAMILY</scope>
    <source>
        <strain>cv. Nisqually</strain>
    </source>
</reference>
<accession>B9N9Y7</accession>
<name>NRMP1_POPTR</name>
<gene>
    <name evidence="3 4" type="primary">NRAMP1</name>
    <name evidence="5" type="ordered locus">Potri.001G044900</name>
</gene>
<comment type="function">
    <text evidence="3">Probable divalent metal transporter.</text>
</comment>
<comment type="subcellular location">
    <subcellularLocation>
        <location evidence="1">Membrane</location>
        <topology evidence="1">Multi-pass membrane protein</topology>
    </subcellularLocation>
</comment>
<comment type="similarity">
    <text evidence="5">Belongs to the NRAMP (TC 2.A.55) family.</text>
</comment>
<dbReference type="EMBL" id="CM009290">
    <property type="protein sequence ID" value="PNT52669.1"/>
    <property type="molecule type" value="Genomic_DNA"/>
</dbReference>
<dbReference type="RefSeq" id="XP_006368514.1">
    <property type="nucleotide sequence ID" value="XM_006368452.1"/>
</dbReference>
<dbReference type="SMR" id="B9N9Y7"/>
<dbReference type="FunCoup" id="B9N9Y7">
    <property type="interactions" value="135"/>
</dbReference>
<dbReference type="STRING" id="3694.B9N9Y7"/>
<dbReference type="KEGG" id="pop:18094263"/>
<dbReference type="eggNOG" id="KOG1291">
    <property type="taxonomic scope" value="Eukaryota"/>
</dbReference>
<dbReference type="HOGENOM" id="CLU_020088_0_1_1"/>
<dbReference type="InParanoid" id="B9N9Y7"/>
<dbReference type="OrthoDB" id="409173at2759"/>
<dbReference type="Proteomes" id="UP000006729">
    <property type="component" value="Chromosome 1"/>
</dbReference>
<dbReference type="ExpressionAtlas" id="B9N9Y7">
    <property type="expression patterns" value="baseline and differential"/>
</dbReference>
<dbReference type="GO" id="GO:0005886">
    <property type="term" value="C:plasma membrane"/>
    <property type="evidence" value="ECO:0000318"/>
    <property type="project" value="GO_Central"/>
</dbReference>
<dbReference type="GO" id="GO:0015086">
    <property type="term" value="F:cadmium ion transmembrane transporter activity"/>
    <property type="evidence" value="ECO:0000318"/>
    <property type="project" value="GO_Central"/>
</dbReference>
<dbReference type="GO" id="GO:0005384">
    <property type="term" value="F:manganese ion transmembrane transporter activity"/>
    <property type="evidence" value="ECO:0000318"/>
    <property type="project" value="GO_Central"/>
</dbReference>
<dbReference type="GO" id="GO:0034755">
    <property type="term" value="P:iron ion transmembrane transport"/>
    <property type="evidence" value="ECO:0000318"/>
    <property type="project" value="GO_Central"/>
</dbReference>
<dbReference type="GO" id="GO:0006828">
    <property type="term" value="P:manganese ion transport"/>
    <property type="evidence" value="ECO:0000318"/>
    <property type="project" value="GO_Central"/>
</dbReference>
<dbReference type="HAMAP" id="MF_00221">
    <property type="entry name" value="NRAMP"/>
    <property type="match status" value="1"/>
</dbReference>
<dbReference type="InterPro" id="IPR001046">
    <property type="entry name" value="NRAMP_fam"/>
</dbReference>
<dbReference type="NCBIfam" id="TIGR01197">
    <property type="entry name" value="nramp"/>
    <property type="match status" value="1"/>
</dbReference>
<dbReference type="NCBIfam" id="NF037982">
    <property type="entry name" value="Nramp_1"/>
    <property type="match status" value="1"/>
</dbReference>
<dbReference type="NCBIfam" id="NF001923">
    <property type="entry name" value="PRK00701.1"/>
    <property type="match status" value="1"/>
</dbReference>
<dbReference type="PANTHER" id="PTHR11706:SF54">
    <property type="entry name" value="METAL TRANSPORTER NRAMP1"/>
    <property type="match status" value="1"/>
</dbReference>
<dbReference type="PANTHER" id="PTHR11706">
    <property type="entry name" value="SOLUTE CARRIER PROTEIN FAMILY 11 MEMBER"/>
    <property type="match status" value="1"/>
</dbReference>
<dbReference type="Pfam" id="PF01566">
    <property type="entry name" value="Nramp"/>
    <property type="match status" value="1"/>
</dbReference>
<dbReference type="PRINTS" id="PR00447">
    <property type="entry name" value="NATRESASSCMP"/>
</dbReference>
<sequence>MAGSSSVQPQFIASTGNRSFSNAPLIENSDPEQIIVPDRKSWKNLFAYMGPGFLVSIAYIDPGNFETDLQSGAQYKYELLWIILVASCAALIIQSLAANLGVVTGKHLAEHCRNEYPRIPNFILWVLAEIAIVACDIPEVIGTAFALNMLFKIPVWIGVLLTGLSTLVLLALQQYGVRKLELFIAFLVCTIAGCFFAELGYAKPDAKEVLKGLFVPQLKGNGAAGLAISLLGAMVMPHNLFLHSALVLSRKIPRSMHGIKDACRFYMIESGFALVLAFLINVSIISVSGAVCNSPNINAQDQENCKDLDLNKASFLLENVLGSWSSKLFAIALLASGQSSTITGTYAGQYVMQGFLDLRLTPWLRNFLTRSLAIVPSLIVAIIGGSSGAGKLIIIASMILSFELPFALVPLLKFTSSKTKMGIYANSTTISSITWVIGFLIMAINIYYLASSFIKILLHGHLKLVAAIFLGIFGFLGMAVYLAGVAYLVLRRNKEATHLVALTSENPQIANESGNEGVYSLPREDIACMQLPQRRSNANDL</sequence>
<evidence type="ECO:0000255" key="1"/>
<evidence type="ECO:0000255" key="2">
    <source>
        <dbReference type="PROSITE-ProRule" id="PRU00498"/>
    </source>
</evidence>
<evidence type="ECO:0000303" key="3">
    <source>
    </source>
</evidence>
<evidence type="ECO:0000303" key="4">
    <source>
    </source>
</evidence>
<evidence type="ECO:0000305" key="5"/>
<proteinExistence type="inferred from homology"/>
<organism>
    <name type="scientific">Populus trichocarpa</name>
    <name type="common">Western balsam poplar</name>
    <name type="synonym">Populus balsamifera subsp. trichocarpa</name>
    <dbReference type="NCBI Taxonomy" id="3694"/>
    <lineage>
        <taxon>Eukaryota</taxon>
        <taxon>Viridiplantae</taxon>
        <taxon>Streptophyta</taxon>
        <taxon>Embryophyta</taxon>
        <taxon>Tracheophyta</taxon>
        <taxon>Spermatophyta</taxon>
        <taxon>Magnoliopsida</taxon>
        <taxon>eudicotyledons</taxon>
        <taxon>Gunneridae</taxon>
        <taxon>Pentapetalae</taxon>
        <taxon>rosids</taxon>
        <taxon>fabids</taxon>
        <taxon>Malpighiales</taxon>
        <taxon>Salicaceae</taxon>
        <taxon>Saliceae</taxon>
        <taxon>Populus</taxon>
    </lineage>
</organism>